<reference key="1">
    <citation type="journal article" date="2007" name="PLoS Genet.">
        <title>Meningococcal genetic variation mechanisms viewed through comparative analysis of serogroup C strain FAM18.</title>
        <authorList>
            <person name="Bentley S.D."/>
            <person name="Vernikos G.S."/>
            <person name="Snyder L.A.S."/>
            <person name="Churcher C."/>
            <person name="Arrowsmith C."/>
            <person name="Chillingworth T."/>
            <person name="Cronin A."/>
            <person name="Davis P.H."/>
            <person name="Holroyd N.E."/>
            <person name="Jagels K."/>
            <person name="Maddison M."/>
            <person name="Moule S."/>
            <person name="Rabbinowitsch E."/>
            <person name="Sharp S."/>
            <person name="Unwin L."/>
            <person name="Whitehead S."/>
            <person name="Quail M.A."/>
            <person name="Achtman M."/>
            <person name="Barrell B.G."/>
            <person name="Saunders N.J."/>
            <person name="Parkhill J."/>
        </authorList>
    </citation>
    <scope>NUCLEOTIDE SEQUENCE [LARGE SCALE GENOMIC DNA]</scope>
    <source>
        <strain>ATCC 700532 / DSM 15464 / FAM18</strain>
    </source>
</reference>
<name>OBG_NEIMF</name>
<accession>A1KWG2</accession>
<gene>
    <name evidence="1" type="primary">obg</name>
    <name type="ordered locus">NMC2065</name>
</gene>
<dbReference type="EC" id="3.6.5.-" evidence="1"/>
<dbReference type="EMBL" id="AM421808">
    <property type="protein sequence ID" value="CAM11219.1"/>
    <property type="molecule type" value="Genomic_DNA"/>
</dbReference>
<dbReference type="SMR" id="A1KWG2"/>
<dbReference type="KEGG" id="nmc:NMC2065"/>
<dbReference type="HOGENOM" id="CLU_011747_2_0_4"/>
<dbReference type="Proteomes" id="UP000002286">
    <property type="component" value="Chromosome"/>
</dbReference>
<dbReference type="GO" id="GO:0005737">
    <property type="term" value="C:cytoplasm"/>
    <property type="evidence" value="ECO:0007669"/>
    <property type="project" value="UniProtKB-SubCell"/>
</dbReference>
<dbReference type="GO" id="GO:0005525">
    <property type="term" value="F:GTP binding"/>
    <property type="evidence" value="ECO:0007669"/>
    <property type="project" value="UniProtKB-UniRule"/>
</dbReference>
<dbReference type="GO" id="GO:0003924">
    <property type="term" value="F:GTPase activity"/>
    <property type="evidence" value="ECO:0007669"/>
    <property type="project" value="UniProtKB-UniRule"/>
</dbReference>
<dbReference type="GO" id="GO:0000287">
    <property type="term" value="F:magnesium ion binding"/>
    <property type="evidence" value="ECO:0007669"/>
    <property type="project" value="InterPro"/>
</dbReference>
<dbReference type="GO" id="GO:0042254">
    <property type="term" value="P:ribosome biogenesis"/>
    <property type="evidence" value="ECO:0007669"/>
    <property type="project" value="UniProtKB-UniRule"/>
</dbReference>
<dbReference type="CDD" id="cd01898">
    <property type="entry name" value="Obg"/>
    <property type="match status" value="1"/>
</dbReference>
<dbReference type="FunFam" id="2.70.210.12:FF:000001">
    <property type="entry name" value="GTPase Obg"/>
    <property type="match status" value="1"/>
</dbReference>
<dbReference type="FunFam" id="3.40.50.300:FF:000185">
    <property type="entry name" value="GTPase Obg"/>
    <property type="match status" value="1"/>
</dbReference>
<dbReference type="Gene3D" id="2.70.210.12">
    <property type="entry name" value="GTP1/OBG domain"/>
    <property type="match status" value="1"/>
</dbReference>
<dbReference type="Gene3D" id="3.40.50.300">
    <property type="entry name" value="P-loop containing nucleotide triphosphate hydrolases"/>
    <property type="match status" value="1"/>
</dbReference>
<dbReference type="HAMAP" id="MF_01454">
    <property type="entry name" value="GTPase_Obg"/>
    <property type="match status" value="1"/>
</dbReference>
<dbReference type="InterPro" id="IPR031167">
    <property type="entry name" value="G_OBG"/>
</dbReference>
<dbReference type="InterPro" id="IPR006073">
    <property type="entry name" value="GTP-bd"/>
</dbReference>
<dbReference type="InterPro" id="IPR014100">
    <property type="entry name" value="GTP-bd_Obg/CgtA"/>
</dbReference>
<dbReference type="InterPro" id="IPR006074">
    <property type="entry name" value="GTP1-OBG_CS"/>
</dbReference>
<dbReference type="InterPro" id="IPR006169">
    <property type="entry name" value="GTP1_OBG_dom"/>
</dbReference>
<dbReference type="InterPro" id="IPR036726">
    <property type="entry name" value="GTP1_OBG_dom_sf"/>
</dbReference>
<dbReference type="InterPro" id="IPR045086">
    <property type="entry name" value="OBG_GTPase"/>
</dbReference>
<dbReference type="InterPro" id="IPR027417">
    <property type="entry name" value="P-loop_NTPase"/>
</dbReference>
<dbReference type="NCBIfam" id="TIGR02729">
    <property type="entry name" value="Obg_CgtA"/>
    <property type="match status" value="1"/>
</dbReference>
<dbReference type="NCBIfam" id="NF008955">
    <property type="entry name" value="PRK12297.1"/>
    <property type="match status" value="1"/>
</dbReference>
<dbReference type="NCBIfam" id="NF008956">
    <property type="entry name" value="PRK12299.1"/>
    <property type="match status" value="1"/>
</dbReference>
<dbReference type="PANTHER" id="PTHR11702">
    <property type="entry name" value="DEVELOPMENTALLY REGULATED GTP-BINDING PROTEIN-RELATED"/>
    <property type="match status" value="1"/>
</dbReference>
<dbReference type="PANTHER" id="PTHR11702:SF31">
    <property type="entry name" value="MITOCHONDRIAL RIBOSOME-ASSOCIATED GTPASE 2"/>
    <property type="match status" value="1"/>
</dbReference>
<dbReference type="Pfam" id="PF01018">
    <property type="entry name" value="GTP1_OBG"/>
    <property type="match status" value="1"/>
</dbReference>
<dbReference type="Pfam" id="PF01926">
    <property type="entry name" value="MMR_HSR1"/>
    <property type="match status" value="1"/>
</dbReference>
<dbReference type="PIRSF" id="PIRSF002401">
    <property type="entry name" value="GTP_bd_Obg/CgtA"/>
    <property type="match status" value="1"/>
</dbReference>
<dbReference type="PRINTS" id="PR00326">
    <property type="entry name" value="GTP1OBG"/>
</dbReference>
<dbReference type="SUPFAM" id="SSF82051">
    <property type="entry name" value="Obg GTP-binding protein N-terminal domain"/>
    <property type="match status" value="1"/>
</dbReference>
<dbReference type="SUPFAM" id="SSF52540">
    <property type="entry name" value="P-loop containing nucleoside triphosphate hydrolases"/>
    <property type="match status" value="1"/>
</dbReference>
<dbReference type="PROSITE" id="PS51710">
    <property type="entry name" value="G_OBG"/>
    <property type="match status" value="1"/>
</dbReference>
<dbReference type="PROSITE" id="PS00905">
    <property type="entry name" value="GTP1_OBG"/>
    <property type="match status" value="1"/>
</dbReference>
<dbReference type="PROSITE" id="PS51883">
    <property type="entry name" value="OBG"/>
    <property type="match status" value="1"/>
</dbReference>
<evidence type="ECO:0000255" key="1">
    <source>
        <dbReference type="HAMAP-Rule" id="MF_01454"/>
    </source>
</evidence>
<evidence type="ECO:0000255" key="2">
    <source>
        <dbReference type="PROSITE-ProRule" id="PRU01231"/>
    </source>
</evidence>
<evidence type="ECO:0000256" key="3">
    <source>
        <dbReference type="SAM" id="MobiDB-lite"/>
    </source>
</evidence>
<comment type="function">
    <text evidence="1">An essential GTPase which binds GTP, GDP and possibly (p)ppGpp with moderate affinity, with high nucleotide exchange rates and a fairly low GTP hydrolysis rate. Plays a role in control of the cell cycle, stress response, ribosome biogenesis and in those bacteria that undergo differentiation, in morphogenesis control.</text>
</comment>
<comment type="cofactor">
    <cofactor evidence="1">
        <name>Mg(2+)</name>
        <dbReference type="ChEBI" id="CHEBI:18420"/>
    </cofactor>
</comment>
<comment type="subunit">
    <text evidence="1">Monomer.</text>
</comment>
<comment type="subcellular location">
    <subcellularLocation>
        <location evidence="1">Cytoplasm</location>
    </subcellularLocation>
</comment>
<comment type="similarity">
    <text evidence="1">Belongs to the TRAFAC class OBG-HflX-like GTPase superfamily. OBG GTPase family.</text>
</comment>
<sequence length="384" mass="41999">MKFIDEAKIEVAAGKGGNGATSFRREKFVPRGGPDGGDGGKGGSVWAEADENTNTLVEYRFVKRYQAKNGEKGHGSDRYGAGADDIVLKMPVGTLIRDLDTDEIVADLTYHGQRVCLAKGGKGGLGNIHFKSSVNRAPKQSTPGEEGEARSLQLELKVLADVGLLGMPNAGKSTLITAVSAARPKIANYPFTTLHPNLGVVRIDENHSFVMADIPGLIEGAAEGAGLGHRFLKHLSRTGLLLHVVDLAPFDETVNPAEEALAIINELRKYDEELYGKPRWLVLNKLDMLDEEEAQTRTAAFLEAVGWDYPKPDDRFQFDMETPRLFQISALTHQGTQELVHQINQYLTEKKRIEAEKAEAEKAAANVEIIEQQPKTDTGVFKPE</sequence>
<protein>
    <recommendedName>
        <fullName evidence="1">GTPase Obg</fullName>
        <ecNumber evidence="1">3.6.5.-</ecNumber>
    </recommendedName>
    <alternativeName>
        <fullName evidence="1">GTP-binding protein Obg</fullName>
    </alternativeName>
</protein>
<feature type="chain" id="PRO_0000386086" description="GTPase Obg">
    <location>
        <begin position="1"/>
        <end position="384"/>
    </location>
</feature>
<feature type="domain" description="Obg" evidence="2">
    <location>
        <begin position="1"/>
        <end position="159"/>
    </location>
</feature>
<feature type="domain" description="OBG-type G" evidence="1">
    <location>
        <begin position="160"/>
        <end position="348"/>
    </location>
</feature>
<feature type="region of interest" description="Disordered" evidence="3">
    <location>
        <begin position="20"/>
        <end position="46"/>
    </location>
</feature>
<feature type="compositionally biased region" description="Gly residues" evidence="3">
    <location>
        <begin position="33"/>
        <end position="43"/>
    </location>
</feature>
<feature type="binding site" evidence="1">
    <location>
        <begin position="166"/>
        <end position="173"/>
    </location>
    <ligand>
        <name>GTP</name>
        <dbReference type="ChEBI" id="CHEBI:37565"/>
    </ligand>
</feature>
<feature type="binding site" evidence="1">
    <location>
        <position position="173"/>
    </location>
    <ligand>
        <name>Mg(2+)</name>
        <dbReference type="ChEBI" id="CHEBI:18420"/>
    </ligand>
</feature>
<feature type="binding site" evidence="1">
    <location>
        <begin position="191"/>
        <end position="195"/>
    </location>
    <ligand>
        <name>GTP</name>
        <dbReference type="ChEBI" id="CHEBI:37565"/>
    </ligand>
</feature>
<feature type="binding site" evidence="1">
    <location>
        <position position="193"/>
    </location>
    <ligand>
        <name>Mg(2+)</name>
        <dbReference type="ChEBI" id="CHEBI:18420"/>
    </ligand>
</feature>
<feature type="binding site" evidence="1">
    <location>
        <begin position="213"/>
        <end position="216"/>
    </location>
    <ligand>
        <name>GTP</name>
        <dbReference type="ChEBI" id="CHEBI:37565"/>
    </ligand>
</feature>
<feature type="binding site" evidence="1">
    <location>
        <begin position="284"/>
        <end position="287"/>
    </location>
    <ligand>
        <name>GTP</name>
        <dbReference type="ChEBI" id="CHEBI:37565"/>
    </ligand>
</feature>
<feature type="binding site" evidence="1">
    <location>
        <begin position="329"/>
        <end position="331"/>
    </location>
    <ligand>
        <name>GTP</name>
        <dbReference type="ChEBI" id="CHEBI:37565"/>
    </ligand>
</feature>
<keyword id="KW-0963">Cytoplasm</keyword>
<keyword id="KW-0342">GTP-binding</keyword>
<keyword id="KW-0378">Hydrolase</keyword>
<keyword id="KW-0460">Magnesium</keyword>
<keyword id="KW-0479">Metal-binding</keyword>
<keyword id="KW-0547">Nucleotide-binding</keyword>
<organism>
    <name type="scientific">Neisseria meningitidis serogroup C / serotype 2a (strain ATCC 700532 / DSM 15464 / FAM18)</name>
    <dbReference type="NCBI Taxonomy" id="272831"/>
    <lineage>
        <taxon>Bacteria</taxon>
        <taxon>Pseudomonadati</taxon>
        <taxon>Pseudomonadota</taxon>
        <taxon>Betaproteobacteria</taxon>
        <taxon>Neisseriales</taxon>
        <taxon>Neisseriaceae</taxon>
        <taxon>Neisseria</taxon>
    </lineage>
</organism>
<proteinExistence type="inferred from homology"/>